<reference key="1">
    <citation type="submission" date="2007-07" db="EMBL/GenBank/DDBJ databases">
        <authorList>
            <consortium name="NIH - Mammalian Gene Collection (MGC) project"/>
        </authorList>
    </citation>
    <scope>NUCLEOTIDE SEQUENCE [LARGE SCALE MRNA]</scope>
    <source>
        <strain>Crossbred X Angus</strain>
        <tissue>Ileum</tissue>
    </source>
</reference>
<name>VPS51_BOVIN</name>
<protein>
    <recommendedName>
        <fullName>Vacuolar protein sorting-associated protein 51 homolog</fullName>
    </recommendedName>
    <alternativeName>
        <fullName>Protein fat-free homolog</fullName>
    </alternativeName>
</protein>
<gene>
    <name type="primary">VPS51</name>
    <name type="synonym">FFR</name>
</gene>
<evidence type="ECO:0000250" key="1">
    <source>
        <dbReference type="UniProtKB" id="Q3UVL4"/>
    </source>
</evidence>
<evidence type="ECO:0000250" key="2">
    <source>
        <dbReference type="UniProtKB" id="Q9UID3"/>
    </source>
</evidence>
<evidence type="ECO:0000255" key="3"/>
<evidence type="ECO:0000256" key="4">
    <source>
        <dbReference type="SAM" id="MobiDB-lite"/>
    </source>
</evidence>
<evidence type="ECO:0000305" key="5"/>
<keyword id="KW-0175">Coiled coil</keyword>
<keyword id="KW-0967">Endosome</keyword>
<keyword id="KW-0333">Golgi apparatus</keyword>
<keyword id="KW-0445">Lipid transport</keyword>
<keyword id="KW-0597">Phosphoprotein</keyword>
<keyword id="KW-0653">Protein transport</keyword>
<keyword id="KW-1185">Reference proteome</keyword>
<keyword id="KW-0813">Transport</keyword>
<accession>A6QQ47</accession>
<comment type="function">
    <text evidence="2">Acts as a component of the GARP complex that is involved in retrograde transport from early and late endosomes to the trans-Golgi network (TGN). The GARP complex is required for the maintenance of protein retrieval from endosomes to the TGN, acid hydrolase sorting, lysosome function, endosomal cholesterol traffic and autophagy. VPS51 participates in retrograde transport of acid hydrolase receptors, likely by promoting tethering and SNARE-dependent fusion of endosome-derived carriers to the TGN. Acts as a component of the EARP complex that is involved in endocytic recycling. The EARP complex associates with Rab4-positive endosomes and promotes recycling of internalized transferrin receptor (TFRC) to the plasma membrane.</text>
</comment>
<comment type="subunit">
    <text evidence="1 2">Component of the Golgi-associated retrograde protein (GARP) complex, also called VFT (VPS fifty-three) complex, composed of VPS51, VPS52, VPS53 and VPS54 (By similarity). Component of the endosome-associated retrograde protein (EARP) complex, composed of VPS51, VPS52, VPS53 and VPS50/Syndetin (By similarity). EIPR1 interacts with both EARP and GARP complexes and mediates the recruitment of the GARP complex to the trans-Golgi network (By similarity). Interacts with STX6 (via N-terminus) (By similarity). Interacts with VPS50 and VPS54 in an EIPR1-independent manner (By similarity).</text>
</comment>
<comment type="subcellular location">
    <subcellularLocation>
        <location evidence="2">Golgi apparatus</location>
        <location evidence="2">trans-Golgi network</location>
    </subcellularLocation>
    <subcellularLocation>
        <location evidence="2">Recycling endosome</location>
    </subcellularLocation>
    <text evidence="2">Localizes to the trans-Golgi network as part of the GARP complex, while it localizes to recycling endosomes as part of the EARP complex.</text>
</comment>
<comment type="similarity">
    <text evidence="5">Belongs to the VPS51 family.</text>
</comment>
<sequence length="781" mass="85930">MAAAAAAPGPGSGPGDSPEGPEAEGPERRRKAHGMLKLYYGLSEGEAAGRPSGPDPLDPTDLNGAHFDPEVYLDKLRRECPLAQLMDSETDMVRQIRALDSDMQTLVYENYNKFISATDTIRKMKNDFRKMEDEMDRLATNMAVITDFSARISATLQDPHERITKLAGVHALLRKLQILFELPSRLTKCVELGAYGQAVRYQGRARAVLQQYQHLPSFRAIQDDCQVITARLAQQLRQRFREGGSGAPEQAECVELLLALGEPAEELCEEFLAHARGRLEEELRSLEAELGPSPLAPDVLEFTDHGGSGFVGGLCQVAAAYQELFAAQGPAGAEKLAAFARELGSRYFALVERRLAQEQGSGDNSLLVRALDRFHRRLRAPGALLAAAGLAEAATEIVERVARERLGHHLQGLQAAFLGSLTDVRQALAAPRIAGKEGPGLAELLANVASSILSHIKASLASVHLFTAKEVSFSNKPYFRGEFCSQGVRESLIVGFIRSMCQTAQSFCDSPGEKGGATPPALLLLLSRLCLDYETATISYILTLTDEQFLVQDQSPVTPVSTLCAEARETARRLLTHYVKVQGLVISQMLRKSVETRDWLSTLEPRNVRAVMKRVVEDTTAIDVQVGLLYEEGVRKAQSSDSSKRTFSVYSSSRQQGRYAPSYTPSAPMDTNLLSNIQKLFSERIDVFSPVEFNKVSVLTGIIKISLKTLLECVRLRTFGRFGLQQVQVDCHFLQLYLWRFVADEELVHLLLDEVVASAALRCPDPVPMEPSVVEVICERG</sequence>
<proteinExistence type="evidence at transcript level"/>
<dbReference type="EMBL" id="BC149640">
    <property type="protein sequence ID" value="AAI49641.1"/>
    <property type="molecule type" value="mRNA"/>
</dbReference>
<dbReference type="RefSeq" id="NP_001095563.1">
    <property type="nucleotide sequence ID" value="NM_001102093.2"/>
</dbReference>
<dbReference type="SMR" id="A6QQ47"/>
<dbReference type="FunCoup" id="A6QQ47">
    <property type="interactions" value="3464"/>
</dbReference>
<dbReference type="STRING" id="9913.ENSBTAP00000020600"/>
<dbReference type="GeneID" id="525567"/>
<dbReference type="KEGG" id="bta:525567"/>
<dbReference type="CTD" id="738"/>
<dbReference type="eggNOG" id="KOG2346">
    <property type="taxonomic scope" value="Eukaryota"/>
</dbReference>
<dbReference type="InParanoid" id="A6QQ47"/>
<dbReference type="OrthoDB" id="203678at2759"/>
<dbReference type="Proteomes" id="UP000009136">
    <property type="component" value="Unplaced"/>
</dbReference>
<dbReference type="GO" id="GO:0005829">
    <property type="term" value="C:cytosol"/>
    <property type="evidence" value="ECO:0007669"/>
    <property type="project" value="GOC"/>
</dbReference>
<dbReference type="GO" id="GO:1990745">
    <property type="term" value="C:EARP complex"/>
    <property type="evidence" value="ECO:0000250"/>
    <property type="project" value="UniProtKB"/>
</dbReference>
<dbReference type="GO" id="GO:0000938">
    <property type="term" value="C:GARP complex"/>
    <property type="evidence" value="ECO:0000250"/>
    <property type="project" value="UniProtKB"/>
</dbReference>
<dbReference type="GO" id="GO:0005794">
    <property type="term" value="C:Golgi apparatus"/>
    <property type="evidence" value="ECO:0000250"/>
    <property type="project" value="UniProtKB"/>
</dbReference>
<dbReference type="GO" id="GO:0016020">
    <property type="term" value="C:membrane"/>
    <property type="evidence" value="ECO:0000318"/>
    <property type="project" value="GO_Central"/>
</dbReference>
<dbReference type="GO" id="GO:0055037">
    <property type="term" value="C:recycling endosome"/>
    <property type="evidence" value="ECO:0000250"/>
    <property type="project" value="UniProtKB"/>
</dbReference>
<dbReference type="GO" id="GO:0032456">
    <property type="term" value="P:endocytic recycling"/>
    <property type="evidence" value="ECO:0000250"/>
    <property type="project" value="UniProtKB"/>
</dbReference>
<dbReference type="GO" id="GO:0007030">
    <property type="term" value="P:Golgi organization"/>
    <property type="evidence" value="ECO:0000318"/>
    <property type="project" value="GO_Central"/>
</dbReference>
<dbReference type="GO" id="GO:0048193">
    <property type="term" value="P:Golgi vesicle transport"/>
    <property type="evidence" value="ECO:0000318"/>
    <property type="project" value="GO_Central"/>
</dbReference>
<dbReference type="GO" id="GO:0006869">
    <property type="term" value="P:lipid transport"/>
    <property type="evidence" value="ECO:0007669"/>
    <property type="project" value="UniProtKB-KW"/>
</dbReference>
<dbReference type="GO" id="GO:0007041">
    <property type="term" value="P:lysosomal transport"/>
    <property type="evidence" value="ECO:0000318"/>
    <property type="project" value="GO_Central"/>
</dbReference>
<dbReference type="GO" id="GO:0015031">
    <property type="term" value="P:protein transport"/>
    <property type="evidence" value="ECO:0007669"/>
    <property type="project" value="UniProtKB-KW"/>
</dbReference>
<dbReference type="GO" id="GO:0042147">
    <property type="term" value="P:retrograde transport, endosome to Golgi"/>
    <property type="evidence" value="ECO:0000250"/>
    <property type="project" value="UniProtKB"/>
</dbReference>
<dbReference type="InterPro" id="IPR016159">
    <property type="entry name" value="Cullin_repeat-like_dom_sf"/>
</dbReference>
<dbReference type="InterPro" id="IPR014812">
    <property type="entry name" value="Vps51"/>
</dbReference>
<dbReference type="PANTHER" id="PTHR15954">
    <property type="entry name" value="VACUOLAR PROTEIN SORTING-ASSOCIATED PROTEIN 51 HOMOLOG"/>
    <property type="match status" value="1"/>
</dbReference>
<dbReference type="PANTHER" id="PTHR15954:SF4">
    <property type="entry name" value="VACUOLAR PROTEIN SORTING-ASSOCIATED PROTEIN 51 HOMOLOG"/>
    <property type="match status" value="1"/>
</dbReference>
<dbReference type="Pfam" id="PF08700">
    <property type="entry name" value="VPS51_Exo84_N"/>
    <property type="match status" value="1"/>
</dbReference>
<dbReference type="SUPFAM" id="SSF74788">
    <property type="entry name" value="Cullin repeat-like"/>
    <property type="match status" value="1"/>
</dbReference>
<feature type="chain" id="PRO_0000358912" description="Vacuolar protein sorting-associated protein 51 homolog">
    <location>
        <begin position="1"/>
        <end position="781"/>
    </location>
</feature>
<feature type="region of interest" description="Disordered" evidence="4">
    <location>
        <begin position="1"/>
        <end position="66"/>
    </location>
</feature>
<feature type="coiled-coil region" evidence="3">
    <location>
        <begin position="115"/>
        <end position="146"/>
    </location>
</feature>
<feature type="coiled-coil region" evidence="3">
    <location>
        <begin position="269"/>
        <end position="291"/>
    </location>
</feature>
<feature type="compositionally biased region" description="Low complexity" evidence="4">
    <location>
        <begin position="1"/>
        <end position="18"/>
    </location>
</feature>
<feature type="modified residue" description="Phosphoserine" evidence="2">
    <location>
        <position position="17"/>
    </location>
</feature>
<feature type="modified residue" description="Phosphoserine" evidence="1">
    <location>
        <position position="43"/>
    </location>
</feature>
<feature type="modified residue" description="Phosphoserine" evidence="2">
    <location>
        <position position="648"/>
    </location>
</feature>
<organism>
    <name type="scientific">Bos taurus</name>
    <name type="common">Bovine</name>
    <dbReference type="NCBI Taxonomy" id="9913"/>
    <lineage>
        <taxon>Eukaryota</taxon>
        <taxon>Metazoa</taxon>
        <taxon>Chordata</taxon>
        <taxon>Craniata</taxon>
        <taxon>Vertebrata</taxon>
        <taxon>Euteleostomi</taxon>
        <taxon>Mammalia</taxon>
        <taxon>Eutheria</taxon>
        <taxon>Laurasiatheria</taxon>
        <taxon>Artiodactyla</taxon>
        <taxon>Ruminantia</taxon>
        <taxon>Pecora</taxon>
        <taxon>Bovidae</taxon>
        <taxon>Bovinae</taxon>
        <taxon>Bos</taxon>
    </lineage>
</organism>